<accession>Q2A3U1</accession>
<reference key="1">
    <citation type="submission" date="2006-03" db="EMBL/GenBank/DDBJ databases">
        <title>Complete genome sequence of Francisella tularensis LVS (Live Vaccine Strain).</title>
        <authorList>
            <person name="Chain P."/>
            <person name="Larimer F."/>
            <person name="Land M."/>
            <person name="Stilwagen S."/>
            <person name="Larsson P."/>
            <person name="Bearden S."/>
            <person name="Chu M."/>
            <person name="Oyston P."/>
            <person name="Forsman M."/>
            <person name="Andersson S."/>
            <person name="Lindler L."/>
            <person name="Titball R."/>
            <person name="Garcia E."/>
        </authorList>
    </citation>
    <scope>NUCLEOTIDE SEQUENCE [LARGE SCALE GENOMIC DNA]</scope>
    <source>
        <strain>LVS</strain>
    </source>
</reference>
<protein>
    <recommendedName>
        <fullName evidence="1">ATP-dependent Clp protease proteolytic subunit</fullName>
        <ecNumber evidence="1">3.4.21.92</ecNumber>
    </recommendedName>
    <alternativeName>
        <fullName evidence="1">Endopeptidase Clp</fullName>
    </alternativeName>
</protein>
<name>CLPP_FRATH</name>
<feature type="chain" id="PRO_0000252818" description="ATP-dependent Clp protease proteolytic subunit">
    <location>
        <begin position="1"/>
        <end position="201"/>
    </location>
</feature>
<feature type="active site" description="Nucleophile" evidence="1">
    <location>
        <position position="101"/>
    </location>
</feature>
<feature type="active site" evidence="1">
    <location>
        <position position="126"/>
    </location>
</feature>
<proteinExistence type="inferred from homology"/>
<organism>
    <name type="scientific">Francisella tularensis subsp. holarctica (strain LVS)</name>
    <dbReference type="NCBI Taxonomy" id="376619"/>
    <lineage>
        <taxon>Bacteria</taxon>
        <taxon>Pseudomonadati</taxon>
        <taxon>Pseudomonadota</taxon>
        <taxon>Gammaproteobacteria</taxon>
        <taxon>Thiotrichales</taxon>
        <taxon>Francisellaceae</taxon>
        <taxon>Francisella</taxon>
    </lineage>
</organism>
<dbReference type="EC" id="3.4.21.92" evidence="1"/>
<dbReference type="EMBL" id="AM233362">
    <property type="protein sequence ID" value="CAJ79331.1"/>
    <property type="molecule type" value="Genomic_DNA"/>
</dbReference>
<dbReference type="RefSeq" id="WP_003015534.1">
    <property type="nucleotide sequence ID" value="NZ_CP009694.1"/>
</dbReference>
<dbReference type="SMR" id="Q2A3U1"/>
<dbReference type="MEROPS" id="S14.001"/>
<dbReference type="GeneID" id="75265209"/>
<dbReference type="KEGG" id="ftl:FTL_0892"/>
<dbReference type="Proteomes" id="UP000001944">
    <property type="component" value="Chromosome"/>
</dbReference>
<dbReference type="GO" id="GO:0005737">
    <property type="term" value="C:cytoplasm"/>
    <property type="evidence" value="ECO:0007669"/>
    <property type="project" value="UniProtKB-SubCell"/>
</dbReference>
<dbReference type="GO" id="GO:0009368">
    <property type="term" value="C:endopeptidase Clp complex"/>
    <property type="evidence" value="ECO:0007669"/>
    <property type="project" value="TreeGrafter"/>
</dbReference>
<dbReference type="GO" id="GO:0004176">
    <property type="term" value="F:ATP-dependent peptidase activity"/>
    <property type="evidence" value="ECO:0007669"/>
    <property type="project" value="InterPro"/>
</dbReference>
<dbReference type="GO" id="GO:0051117">
    <property type="term" value="F:ATPase binding"/>
    <property type="evidence" value="ECO:0007669"/>
    <property type="project" value="TreeGrafter"/>
</dbReference>
<dbReference type="GO" id="GO:0004252">
    <property type="term" value="F:serine-type endopeptidase activity"/>
    <property type="evidence" value="ECO:0007669"/>
    <property type="project" value="UniProtKB-UniRule"/>
</dbReference>
<dbReference type="GO" id="GO:0006515">
    <property type="term" value="P:protein quality control for misfolded or incompletely synthesized proteins"/>
    <property type="evidence" value="ECO:0007669"/>
    <property type="project" value="TreeGrafter"/>
</dbReference>
<dbReference type="CDD" id="cd07017">
    <property type="entry name" value="S14_ClpP_2"/>
    <property type="match status" value="1"/>
</dbReference>
<dbReference type="FunFam" id="3.90.226.10:FF:000001">
    <property type="entry name" value="ATP-dependent Clp protease proteolytic subunit"/>
    <property type="match status" value="1"/>
</dbReference>
<dbReference type="Gene3D" id="3.90.226.10">
    <property type="entry name" value="2-enoyl-CoA Hydratase, Chain A, domain 1"/>
    <property type="match status" value="1"/>
</dbReference>
<dbReference type="HAMAP" id="MF_00444">
    <property type="entry name" value="ClpP"/>
    <property type="match status" value="1"/>
</dbReference>
<dbReference type="InterPro" id="IPR001907">
    <property type="entry name" value="ClpP"/>
</dbReference>
<dbReference type="InterPro" id="IPR029045">
    <property type="entry name" value="ClpP/crotonase-like_dom_sf"/>
</dbReference>
<dbReference type="InterPro" id="IPR023562">
    <property type="entry name" value="ClpP/TepA"/>
</dbReference>
<dbReference type="InterPro" id="IPR033135">
    <property type="entry name" value="ClpP_His_AS"/>
</dbReference>
<dbReference type="InterPro" id="IPR018215">
    <property type="entry name" value="ClpP_Ser_AS"/>
</dbReference>
<dbReference type="NCBIfam" id="TIGR00493">
    <property type="entry name" value="clpP"/>
    <property type="match status" value="1"/>
</dbReference>
<dbReference type="NCBIfam" id="NF001368">
    <property type="entry name" value="PRK00277.1"/>
    <property type="match status" value="1"/>
</dbReference>
<dbReference type="NCBIfam" id="NF009205">
    <property type="entry name" value="PRK12553.1"/>
    <property type="match status" value="1"/>
</dbReference>
<dbReference type="PANTHER" id="PTHR10381">
    <property type="entry name" value="ATP-DEPENDENT CLP PROTEASE PROTEOLYTIC SUBUNIT"/>
    <property type="match status" value="1"/>
</dbReference>
<dbReference type="PANTHER" id="PTHR10381:SF70">
    <property type="entry name" value="ATP-DEPENDENT CLP PROTEASE PROTEOLYTIC SUBUNIT"/>
    <property type="match status" value="1"/>
</dbReference>
<dbReference type="Pfam" id="PF00574">
    <property type="entry name" value="CLP_protease"/>
    <property type="match status" value="1"/>
</dbReference>
<dbReference type="PRINTS" id="PR00127">
    <property type="entry name" value="CLPPROTEASEP"/>
</dbReference>
<dbReference type="SUPFAM" id="SSF52096">
    <property type="entry name" value="ClpP/crotonase"/>
    <property type="match status" value="1"/>
</dbReference>
<dbReference type="PROSITE" id="PS00382">
    <property type="entry name" value="CLP_PROTEASE_HIS"/>
    <property type="match status" value="1"/>
</dbReference>
<dbReference type="PROSITE" id="PS00381">
    <property type="entry name" value="CLP_PROTEASE_SER"/>
    <property type="match status" value="1"/>
</dbReference>
<keyword id="KW-0963">Cytoplasm</keyword>
<keyword id="KW-0378">Hydrolase</keyword>
<keyword id="KW-0645">Protease</keyword>
<keyword id="KW-1185">Reference proteome</keyword>
<keyword id="KW-0720">Serine protease</keyword>
<gene>
    <name evidence="1" type="primary">clpP</name>
    <name type="ordered locus">FTL_0892</name>
</gene>
<comment type="function">
    <text evidence="1">Cleaves peptides in various proteins in a process that requires ATP hydrolysis. Has a chymotrypsin-like activity. Plays a major role in the degradation of misfolded proteins.</text>
</comment>
<comment type="catalytic activity">
    <reaction evidence="1">
        <text>Hydrolysis of proteins to small peptides in the presence of ATP and magnesium. alpha-casein is the usual test substrate. In the absence of ATP, only oligopeptides shorter than five residues are hydrolyzed (such as succinyl-Leu-Tyr-|-NHMec, and Leu-Tyr-Leu-|-Tyr-Trp, in which cleavage of the -Tyr-|-Leu- and -Tyr-|-Trp bonds also occurs).</text>
        <dbReference type="EC" id="3.4.21.92"/>
    </reaction>
</comment>
<comment type="subunit">
    <text evidence="1">Fourteen ClpP subunits assemble into 2 heptameric rings which stack back to back to give a disk-like structure with a central cavity, resembling the structure of eukaryotic proteasomes.</text>
</comment>
<comment type="subcellular location">
    <subcellularLocation>
        <location evidence="1">Cytoplasm</location>
    </subcellularLocation>
</comment>
<comment type="similarity">
    <text evidence="1">Belongs to the peptidase S14 family.</text>
</comment>
<sequence length="201" mass="22150">MITNNLVPTVIEKTAGGERAFDIYSRLLKERIVFLNGEVNDHSANLVIAQLLFLESEDPDKDIYFYINSPGGMVTAGMGVYDTMQFIKPDVSTICIGLAASMGSLLLAGGAKGKRYSLPSSQIMIHQPLGGFRGQASDIEIHAKNILRIKDRLNKVLAHHTGQDLETIVKDTDRDNFMMADEAKAYGLIDHVIESREAIIK</sequence>
<evidence type="ECO:0000255" key="1">
    <source>
        <dbReference type="HAMAP-Rule" id="MF_00444"/>
    </source>
</evidence>